<protein>
    <recommendedName>
        <fullName evidence="5">Conopeptide X11.1</fullName>
    </recommendedName>
    <alternativeName>
        <fullName evidence="4">I1_xm11a</fullName>
    </alternativeName>
</protein>
<evidence type="ECO:0000250" key="1">
    <source>
        <dbReference type="UniProtKB" id="Q7Z094"/>
    </source>
</evidence>
<evidence type="ECO:0000255" key="2"/>
<evidence type="ECO:0000269" key="3">
    <source>
    </source>
</evidence>
<evidence type="ECO:0000303" key="4">
    <source>
    </source>
</evidence>
<evidence type="ECO:0000305" key="5"/>
<evidence type="ECO:0000305" key="6">
    <source>
    </source>
</evidence>
<comment type="function">
    <text evidence="3">Antimicrobial peptide that potently inhibits growth of Mycobacterium tuberculosis (H37Rv strain) (MIC=3 uM).</text>
</comment>
<comment type="subcellular location">
    <subcellularLocation>
        <location evidence="3">Secreted</location>
    </subcellularLocation>
</comment>
<comment type="tissue specificity">
    <text evidence="6">Expressed by the venom duct.</text>
</comment>
<comment type="domain">
    <text evidence="5">The cysteine framework is XI (C-C-CC-CC-C-C).</text>
</comment>
<comment type="mass spectrometry"/>
<comment type="similarity">
    <text evidence="5">Belongs to the conotoxin I1 superfamily.</text>
</comment>
<name>I1B1_CONXI</name>
<dbReference type="SMR" id="P0DW72"/>
<dbReference type="GO" id="GO:0005576">
    <property type="term" value="C:extracellular region"/>
    <property type="evidence" value="ECO:0007669"/>
    <property type="project" value="UniProtKB-SubCell"/>
</dbReference>
<dbReference type="GO" id="GO:0042742">
    <property type="term" value="P:defense response to bacterium"/>
    <property type="evidence" value="ECO:0007669"/>
    <property type="project" value="UniProtKB-KW"/>
</dbReference>
<dbReference type="InterPro" id="IPR013141">
    <property type="entry name" value="Conotoxin-I_CS"/>
</dbReference>
<dbReference type="PROSITE" id="PS60019">
    <property type="entry name" value="I_CONOTOXIN"/>
    <property type="match status" value="1"/>
</dbReference>
<reference key="1">
    <citation type="journal article" date="2018" name="Toxins">
        <title>Antimycobacterial activity: a new pharmacological target for conotoxins found in the first reported conotoxin from Conasprella ximenes.</title>
        <authorList>
            <person name="Figueroa-Montiel A."/>
            <person name="Bernaldez J."/>
            <person name="Jimenez S."/>
            <person name="Ueberhide B."/>
            <person name="Gonzalez L.J."/>
            <person name="Licea-Navarro A."/>
        </authorList>
    </citation>
    <scope>NUCLEOTIDE SEQUENCE [MRNA]</scope>
    <scope>PROTEIN SEQUENCE OF 40-76</scope>
    <scope>FUNCTION</scope>
    <scope>SUBCELLULAR LOCATION</scope>
    <scope>MASS SPECTROMETRY</scope>
    <source>
        <tissue>Venom</tissue>
        <tissue>Venom duct</tissue>
    </source>
</reference>
<accession>P0DW72</accession>
<organism>
    <name type="scientific">Conasprella ximenes</name>
    <name type="common">Interrupted cone</name>
    <name type="synonym">Conus ximenes</name>
    <dbReference type="NCBI Taxonomy" id="257349"/>
    <lineage>
        <taxon>Eukaryota</taxon>
        <taxon>Metazoa</taxon>
        <taxon>Spiralia</taxon>
        <taxon>Lophotrochozoa</taxon>
        <taxon>Mollusca</taxon>
        <taxon>Gastropoda</taxon>
        <taxon>Caenogastropoda</taxon>
        <taxon>Neogastropoda</taxon>
        <taxon>Conoidea</taxon>
        <taxon>Conidae</taxon>
        <taxon>Conasprella</taxon>
        <taxon>Ximeniconus</taxon>
    </lineage>
</organism>
<proteinExistence type="evidence at protein level"/>
<sequence>MMKLSVSFLLLLMLLPFITGEENSDSDVLKSGAAVRQGRGRCRGFREDCSQHRDCCGDLCCNGNTCVITVIACPKW</sequence>
<feature type="signal peptide" evidence="2">
    <location>
        <begin position="1"/>
        <end position="20"/>
    </location>
</feature>
<feature type="propeptide" id="PRO_0000456320" evidence="6">
    <location>
        <begin position="21"/>
        <end position="39"/>
    </location>
</feature>
<feature type="chain" id="PRO_0000456321" description="Conopeptide X11.1" evidence="3">
    <location>
        <begin position="40"/>
        <end position="76"/>
    </location>
</feature>
<feature type="disulfide bond" evidence="1">
    <location>
        <begin position="42"/>
        <end position="56"/>
    </location>
</feature>
<feature type="disulfide bond" evidence="1">
    <location>
        <begin position="49"/>
        <end position="61"/>
    </location>
</feature>
<feature type="disulfide bond" evidence="1">
    <location>
        <begin position="55"/>
        <end position="66"/>
    </location>
</feature>
<feature type="disulfide bond" evidence="1">
    <location>
        <begin position="60"/>
        <end position="73"/>
    </location>
</feature>
<keyword id="KW-0044">Antibiotic</keyword>
<keyword id="KW-0929">Antimicrobial</keyword>
<keyword id="KW-0903">Direct protein sequencing</keyword>
<keyword id="KW-1015">Disulfide bond</keyword>
<keyword id="KW-0964">Secreted</keyword>
<keyword id="KW-0732">Signal</keyword>